<comment type="function">
    <text evidence="2 3 4">Plays a role in vesicle-mediated secretory processes. Required for normal accumulation of secretory vesicles in hippocampus, pituitary and pancreatic islets. Required for the accumulation of normal levels of insulin-containing vesicles and preventing their degradation. Plays a role in insulin secretion in response to glucose stimuli. Required for normal accumulation of the neurotransmitters norepinephrine, dopamine and serotonin in the brain. In females, but not in males, required for normal accumulation and secretion of pituitary hormones, such as luteinizing hormone (LH) and follicle-stimulating hormone (FSH). Required to maintain normal levels of renin expression and renin release. May regulate catalytic active protein-tyrosine phosphatases such as PTPRA through dimerization. Has phosphatidylinositol phosphatase activity; the PIPase activity is involved in its ability to regulate insulin secretion. Can dephosphorylate phosphatidylinositol 4,5-biphosphate, phosphatidylinositol 5-phosphate and phosphatidylinositol 3-phosphate. Regulates PI(4,5)P2 level in the plasma membrane and localization of cofilin at the plasma membrane and thus is indirectly involved in regulation of actin dynamics related to cell migration and metastasis; upon hydrolysis of PI(4,5)P2 cofilin is released from the plasma membrane and acts in the cytoplasm in severing F-actin filaments.</text>
</comment>
<comment type="catalytic activity">
    <reaction evidence="7">
        <text>O-phospho-L-tyrosyl-[protein] + H2O = L-tyrosyl-[protein] + phosphate</text>
        <dbReference type="Rhea" id="RHEA:10684"/>
        <dbReference type="Rhea" id="RHEA-COMP:10136"/>
        <dbReference type="Rhea" id="RHEA-COMP:20101"/>
        <dbReference type="ChEBI" id="CHEBI:15377"/>
        <dbReference type="ChEBI" id="CHEBI:43474"/>
        <dbReference type="ChEBI" id="CHEBI:46858"/>
        <dbReference type="ChEBI" id="CHEBI:61978"/>
        <dbReference type="EC" id="3.1.3.48"/>
    </reaction>
</comment>
<comment type="subunit">
    <text evidence="2 3">Self-associates. Interacts (via cytoplasmic domain) with PTPRN (via cytoplasmic domain). Interacts (precursor form) with CPE. Interacts with HAP1. Interacts with AP2A1 or AP2A2 and AP1G1; indicative for an association with adaptor protein complex 2 (AP-2) and adaptor protein complex 1 (AP-1). Interacts with AP2M1; indicative for an association with adaptor protein complex 2 (AP-2). Interacts with MYO5A.</text>
</comment>
<comment type="subcellular location">
    <subcellularLocation>
        <location evidence="2">Cytoplasmic vesicle</location>
        <location evidence="2">Secretory vesicle membrane</location>
        <topology evidence="2">Single-pass type I membrane protein</topology>
    </subcellularLocation>
    <subcellularLocation>
        <location evidence="2">Cytoplasmic vesicle</location>
        <location evidence="2">Secretory vesicle</location>
        <location evidence="2">Synaptic vesicle membrane</location>
        <topology evidence="2">Single-pass type I membrane protein</topology>
    </subcellularLocation>
    <text evidence="2 3">Predominantly found on dense-core secretory granules. Sorting to secretory granules in part is dependent of the N-terminal propeptide domain of the precursor and its interaction with CPE. Transiently found at the cell membrane, when secretory vesicles fuse with the cell membrane to release their cargo. Is then endocytosed and recycled to secretory vesicles involving clathrin-dependent AP2-mediated endocytosis. Recycled via STX6- but not TTTGN1/TGN38-containing compartments.</text>
</comment>
<comment type="tissue specificity">
    <text evidence="9">Detected in pancreatic islets and adrenal medulla.</text>
</comment>
<comment type="domain">
    <text evidence="3">The tyrosine-based internalization signal is proposed to function in clathrin-mediated endocytosis and recycling.</text>
</comment>
<comment type="domain">
    <text evidence="2">The leucine-based sorting signal is proposed to function in trafficking at the plasma membrane.</text>
</comment>
<comment type="PTM">
    <text evidence="2">Subject to proteolytic cleavage at multiple sites.</text>
</comment>
<comment type="similarity">
    <text evidence="10">Belongs to the protein-tyrosine phosphatase family. Receptor class 8 subfamily.</text>
</comment>
<comment type="caution">
    <text evidence="10">Has no tyrosine-protein phosphatase activity at mild acidic conditions (pH 5.5). The in vivo relevance of the low PPase activity for the human protein at acidic conditions (pH 4.5) is questioned. This catalytic activity seems to be affected by the replacement of a highly conserved residue in the tyrosine-protein phosphatase domain.</text>
</comment>
<feature type="signal peptide" evidence="5">
    <location>
        <begin position="1"/>
        <end position="19"/>
    </location>
</feature>
<feature type="chain" id="PRO_0000025455" description="Receptor-type tyrosine-protein phosphatase N2">
    <location>
        <begin position="20"/>
        <end position="1013"/>
    </location>
</feature>
<feature type="chain" id="PRO_0000438069" description="IA-2beta60" evidence="2">
    <location>
        <begin position="500"/>
        <end position="1013"/>
    </location>
</feature>
<feature type="topological domain" description="Extracellular" evidence="5">
    <location>
        <begin position="20"/>
        <end position="613"/>
    </location>
</feature>
<feature type="transmembrane region" description="Helical" evidence="5">
    <location>
        <begin position="614"/>
        <end position="634"/>
    </location>
</feature>
<feature type="topological domain" description="Cytoplasmic" evidence="5">
    <location>
        <begin position="635"/>
        <end position="1013"/>
    </location>
</feature>
<feature type="domain" description="Tyrosine-protein phosphatase" evidence="6">
    <location>
        <begin position="743"/>
        <end position="1003"/>
    </location>
</feature>
<feature type="region of interest" description="Involved in localization to secretory granules; interaction with CPE" evidence="2">
    <location>
        <begin position="1"/>
        <end position="419"/>
    </location>
</feature>
<feature type="region of interest" description="Disordered" evidence="8">
    <location>
        <begin position="116"/>
        <end position="137"/>
    </location>
</feature>
<feature type="region of interest" description="Disordered" evidence="8">
    <location>
        <begin position="273"/>
        <end position="302"/>
    </location>
</feature>
<feature type="region of interest" description="Disordered" evidence="8">
    <location>
        <begin position="342"/>
        <end position="382"/>
    </location>
</feature>
<feature type="region of interest" description="Disordered" evidence="8">
    <location>
        <begin position="401"/>
        <end position="487"/>
    </location>
</feature>
<feature type="region of interest" description="Disordered" evidence="8">
    <location>
        <begin position="673"/>
        <end position="717"/>
    </location>
</feature>
<feature type="short sequence motif" description="Tyrosine-based internalization motif" evidence="3">
    <location>
        <begin position="664"/>
        <end position="673"/>
    </location>
</feature>
<feature type="short sequence motif" description="Leucine-based sorting signal" evidence="2">
    <location>
        <begin position="1002"/>
        <end position="1008"/>
    </location>
</feature>
<feature type="compositionally biased region" description="Basic and acidic residues" evidence="8">
    <location>
        <begin position="419"/>
        <end position="430"/>
    </location>
</feature>
<feature type="compositionally biased region" description="Polar residues" evidence="8">
    <location>
        <begin position="686"/>
        <end position="696"/>
    </location>
</feature>
<feature type="compositionally biased region" description="Low complexity" evidence="8">
    <location>
        <begin position="703"/>
        <end position="717"/>
    </location>
</feature>
<feature type="active site" description="Phosphocysteine intermediate" evidence="6 7">
    <location>
        <position position="943"/>
    </location>
</feature>
<feature type="binding site" evidence="1">
    <location>
        <position position="911"/>
    </location>
    <ligand>
        <name>substrate</name>
    </ligand>
</feature>
<feature type="binding site" evidence="1">
    <location>
        <begin position="943"/>
        <end position="949"/>
    </location>
    <ligand>
        <name>substrate</name>
    </ligand>
</feature>
<feature type="binding site" evidence="1">
    <location>
        <position position="988"/>
    </location>
    <ligand>
        <name>substrate</name>
    </ligand>
</feature>
<feature type="site" description="Cleavage" evidence="1">
    <location>
        <begin position="425"/>
        <end position="426"/>
    </location>
</feature>
<feature type="modified residue" description="Phosphoserine" evidence="2">
    <location>
        <position position="434"/>
    </location>
</feature>
<feature type="modified residue" description="Phosphoserine" evidence="2">
    <location>
        <position position="435"/>
    </location>
</feature>
<feature type="modified residue" description="Phosphoserine" evidence="3">
    <location>
        <position position="690"/>
    </location>
</feature>
<feature type="modified residue" description="Phosphoserine" evidence="3">
    <location>
        <position position="696"/>
    </location>
</feature>
<feature type="modified residue" description="N6-acetyllysine" evidence="4">
    <location>
        <position position="968"/>
    </location>
</feature>
<feature type="glycosylation site" description="N-linked (GlcNAc...) asparagine" evidence="5">
    <location>
        <position position="562"/>
    </location>
</feature>
<dbReference type="EC" id="3.1.3.-"/>
<dbReference type="EC" id="3.1.3.48"/>
<dbReference type="EMBL" id="U91574">
    <property type="protein sequence ID" value="AAC51186.1"/>
    <property type="molecule type" value="mRNA"/>
</dbReference>
<dbReference type="RefSeq" id="NP_001292849.1">
    <property type="nucleotide sequence ID" value="NM_001305920.1"/>
</dbReference>
<dbReference type="SMR" id="O02695"/>
<dbReference type="STRING" id="9545.ENSMNEP00000016459"/>
<dbReference type="GlyCosmos" id="O02695">
    <property type="glycosylation" value="1 site, No reported glycans"/>
</dbReference>
<dbReference type="GeneID" id="105474981"/>
<dbReference type="KEGG" id="mni:105474981"/>
<dbReference type="CTD" id="5799"/>
<dbReference type="OrthoDB" id="17111at314294"/>
<dbReference type="Proteomes" id="UP000233120">
    <property type="component" value="Unassembled WGS sequence"/>
</dbReference>
<dbReference type="GO" id="GO:0030667">
    <property type="term" value="C:secretory granule membrane"/>
    <property type="evidence" value="ECO:0000250"/>
    <property type="project" value="UniProtKB"/>
</dbReference>
<dbReference type="GO" id="GO:0030672">
    <property type="term" value="C:synaptic vesicle membrane"/>
    <property type="evidence" value="ECO:0000250"/>
    <property type="project" value="UniProtKB"/>
</dbReference>
<dbReference type="GO" id="GO:0004725">
    <property type="term" value="F:protein tyrosine phosphatase activity"/>
    <property type="evidence" value="ECO:0007669"/>
    <property type="project" value="UniProtKB-EC"/>
</dbReference>
<dbReference type="GO" id="GO:0035773">
    <property type="term" value="P:insulin secretion involved in cellular response to glucose stimulus"/>
    <property type="evidence" value="ECO:0000250"/>
    <property type="project" value="UniProtKB"/>
</dbReference>
<dbReference type="GO" id="GO:0006629">
    <property type="term" value="P:lipid metabolic process"/>
    <property type="evidence" value="ECO:0007669"/>
    <property type="project" value="UniProtKB-KW"/>
</dbReference>
<dbReference type="GO" id="GO:0007269">
    <property type="term" value="P:neurotransmitter secretion"/>
    <property type="evidence" value="ECO:0000250"/>
    <property type="project" value="UniProtKB"/>
</dbReference>
<dbReference type="GO" id="GO:0051046">
    <property type="term" value="P:regulation of secretion"/>
    <property type="evidence" value="ECO:0007669"/>
    <property type="project" value="TreeGrafter"/>
</dbReference>
<dbReference type="CDD" id="cd14610">
    <property type="entry name" value="R-PTP-N2"/>
    <property type="match status" value="1"/>
</dbReference>
<dbReference type="FunFam" id="3.30.70.2470:FF:000001">
    <property type="entry name" value="receptor-type tyrosine-protein phosphatase-like N isoform X1"/>
    <property type="match status" value="1"/>
</dbReference>
<dbReference type="FunFam" id="3.90.190.10:FF:000017">
    <property type="entry name" value="receptor-type tyrosine-protein phosphatase-like N isoform X2"/>
    <property type="match status" value="1"/>
</dbReference>
<dbReference type="Gene3D" id="3.90.190.10">
    <property type="entry name" value="Protein tyrosine phosphatase superfamily"/>
    <property type="match status" value="1"/>
</dbReference>
<dbReference type="Gene3D" id="3.30.70.2470">
    <property type="entry name" value="Protein-tyrosine phosphatase receptor IA-2 ectodomain"/>
    <property type="match status" value="1"/>
</dbReference>
<dbReference type="InterPro" id="IPR033522">
    <property type="entry name" value="IA-2/IA-2_beta"/>
</dbReference>
<dbReference type="InterPro" id="IPR029021">
    <property type="entry name" value="Prot-tyrosine_phosphatase-like"/>
</dbReference>
<dbReference type="InterPro" id="IPR000242">
    <property type="entry name" value="PTP_cat"/>
</dbReference>
<dbReference type="InterPro" id="IPR021613">
    <property type="entry name" value="Receptor_IA-2_dom"/>
</dbReference>
<dbReference type="InterPro" id="IPR038112">
    <property type="entry name" value="Receptor_IA-2_ectodomain_sf"/>
</dbReference>
<dbReference type="InterPro" id="IPR029403">
    <property type="entry name" value="RESP18_dom"/>
</dbReference>
<dbReference type="InterPro" id="IPR016130">
    <property type="entry name" value="Tyr_Pase_AS"/>
</dbReference>
<dbReference type="InterPro" id="IPR003595">
    <property type="entry name" value="Tyr_Pase_cat"/>
</dbReference>
<dbReference type="InterPro" id="IPR000387">
    <property type="entry name" value="Tyr_Pase_dom"/>
</dbReference>
<dbReference type="PANTHER" id="PTHR46106">
    <property type="entry name" value="IA-2 PROTEIN TYROSINE PHOSPHATASE, ISOFORM C"/>
    <property type="match status" value="1"/>
</dbReference>
<dbReference type="PANTHER" id="PTHR46106:SF5">
    <property type="entry name" value="RECEPTOR-TYPE TYROSINE-PROTEIN PHOSPHATASE N2"/>
    <property type="match status" value="1"/>
</dbReference>
<dbReference type="Pfam" id="PF11548">
    <property type="entry name" value="Receptor_IA-2"/>
    <property type="match status" value="1"/>
</dbReference>
<dbReference type="Pfam" id="PF14948">
    <property type="entry name" value="RESP18"/>
    <property type="match status" value="1"/>
</dbReference>
<dbReference type="Pfam" id="PF00102">
    <property type="entry name" value="Y_phosphatase"/>
    <property type="match status" value="1"/>
</dbReference>
<dbReference type="PRINTS" id="PR00700">
    <property type="entry name" value="PRTYPHPHTASE"/>
</dbReference>
<dbReference type="SMART" id="SM00194">
    <property type="entry name" value="PTPc"/>
    <property type="match status" value="1"/>
</dbReference>
<dbReference type="SMART" id="SM00404">
    <property type="entry name" value="PTPc_motif"/>
    <property type="match status" value="1"/>
</dbReference>
<dbReference type="SMART" id="SM01305">
    <property type="entry name" value="RESP18"/>
    <property type="match status" value="1"/>
</dbReference>
<dbReference type="SUPFAM" id="SSF52799">
    <property type="entry name" value="(Phosphotyrosine protein) phosphatases II"/>
    <property type="match status" value="1"/>
</dbReference>
<dbReference type="PROSITE" id="PS00383">
    <property type="entry name" value="TYR_PHOSPHATASE_1"/>
    <property type="match status" value="1"/>
</dbReference>
<dbReference type="PROSITE" id="PS50056">
    <property type="entry name" value="TYR_PHOSPHATASE_2"/>
    <property type="match status" value="1"/>
</dbReference>
<dbReference type="PROSITE" id="PS50055">
    <property type="entry name" value="TYR_PHOSPHATASE_PTP"/>
    <property type="match status" value="1"/>
</dbReference>
<accession>O02695</accession>
<proteinExistence type="evidence at transcript level"/>
<evidence type="ECO:0000250" key="1"/>
<evidence type="ECO:0000250" key="2">
    <source>
        <dbReference type="UniProtKB" id="P80560"/>
    </source>
</evidence>
<evidence type="ECO:0000250" key="3">
    <source>
        <dbReference type="UniProtKB" id="Q63475"/>
    </source>
</evidence>
<evidence type="ECO:0000250" key="4">
    <source>
        <dbReference type="UniProtKB" id="Q92932"/>
    </source>
</evidence>
<evidence type="ECO:0000255" key="5"/>
<evidence type="ECO:0000255" key="6">
    <source>
        <dbReference type="PROSITE-ProRule" id="PRU00160"/>
    </source>
</evidence>
<evidence type="ECO:0000255" key="7">
    <source>
        <dbReference type="PROSITE-ProRule" id="PRU10044"/>
    </source>
</evidence>
<evidence type="ECO:0000256" key="8">
    <source>
        <dbReference type="SAM" id="MobiDB-lite"/>
    </source>
</evidence>
<evidence type="ECO:0000269" key="9">
    <source>
    </source>
</evidence>
<evidence type="ECO:0000305" key="10"/>
<name>PTPR2_MACNE</name>
<organism>
    <name type="scientific">Macaca nemestrina</name>
    <name type="common">Pig-tailed macaque</name>
    <dbReference type="NCBI Taxonomy" id="9545"/>
    <lineage>
        <taxon>Eukaryota</taxon>
        <taxon>Metazoa</taxon>
        <taxon>Chordata</taxon>
        <taxon>Craniata</taxon>
        <taxon>Vertebrata</taxon>
        <taxon>Euteleostomi</taxon>
        <taxon>Mammalia</taxon>
        <taxon>Eutheria</taxon>
        <taxon>Euarchontoglires</taxon>
        <taxon>Primates</taxon>
        <taxon>Haplorrhini</taxon>
        <taxon>Catarrhini</taxon>
        <taxon>Cercopithecidae</taxon>
        <taxon>Cercopithecinae</taxon>
        <taxon>Macaca</taxon>
    </lineage>
</organism>
<sequence length="1013" mass="111191">MALPLLLLLLLLLPPRVLPAAPSSVPHGRQLPGRLGCLLEEGLCGASEACVNDGVFGRCQKVPAMDFYRYEVSPVALQRLRVALQKLSGTGFTWQDDYTQYVMDQELADLPKTYLRHPEASGPARPSKHSIGSERRYSQEGGAALAKAFRRHLPFLEALSQAPASDALARTRMAQDRPRAEGDDRFSKSILTYVAHTSVLTYPPGPQAQLPEDLLPRTLSQLQPDELSPKVDSSVERHHLMAALSAYAAQRPPAPPGKGSLEPQYLLRAPSRMPRPLLSPAVPQKWPSPLGDPEDPPSTGEGARIHTLLKDLQRQPAEARGLSDLELDSMAELMAGLMQGMDHRGALGGPGKAALGESGEQADGPKAALRGESFPDDGVQDDDDRLYQEVHRLSATLGGLLQDHGSRLSPGALPFAKPLKMERKKSERPEASLSSEEETAGVENVKSQTYSKDLLGQQPHSEPGAGAFGELQNQMPGPSEEEQSLPAGAQEALGDGLQLEVKPSEEEARGYIVTDRDPLRPEEGRQLVEDVARLLQMPSSTFADVEVLGPAVTFKVGANVQNVTTADVEKATVDNKDKLEETSGLKILQTGVGSKSKLKFLPPQAEQEDSTKFIALTLVSLACILGVLLASGLIYCLRHSSQHRLKEKLSGLGRDPGADATAAYQELCRQRMATRPPDRPEGPHTSRISSVSSQFSDGPMPSPSARSSASSWSEEPVQSNMDISTGHMILSYMEDHLKNKNRLEKEWEALCAYQAEPNSSLVAQKEENVPKNRSLAVLTYDHSRVLLKAENSHSHSDYINASPIMDHDPRNPAYIATQGPLPATVADFWQMVWESGCVVIVMLTPLTENGVRQCYHYWPDEGSNLYHIYEVNLVSEHIWCEDFLVRSFYLKNLQTNETRTVTQFHFLSWYDRGVPSSSRSLLDFRRKVNKCYRGRSCPIIVHCSDGAGRSGTYVLIDMVLNKMAKGAKEIDIAATLEHLRDQRPGMVQTKEQFEFALTAVAEEVNAILKALPQ</sequence>
<gene>
    <name type="primary">PTPRN2</name>
</gene>
<reference key="1">
    <citation type="journal article" date="1997" name="Mol. Med.">
        <title>An islet-cell protein tyrosine phosphatase is a likely precursor to the 37-kDa autoantigen in type 1 diabetes: human and macaque sequences, tissue distribution, unique and shared epitopes, and predictive autoantibodies.</title>
        <authorList>
            <person name="Lagasse J."/>
            <person name="Jelinek L."/>
            <person name="Sexson S."/>
            <person name="Lofton-Day C.E."/>
            <person name="Breininger J."/>
            <person name="Sheppard P."/>
            <person name="Kindsvogel W."/>
            <person name="Hagopian W.A."/>
        </authorList>
    </citation>
    <scope>NUCLEOTIDE SEQUENCE [MRNA]</scope>
    <scope>TISSUE SPECIFICITY</scope>
    <source>
        <tissue>Pancreatic islet</tissue>
    </source>
</reference>
<keyword id="KW-0007">Acetylation</keyword>
<keyword id="KW-0968">Cytoplasmic vesicle</keyword>
<keyword id="KW-0325">Glycoprotein</keyword>
<keyword id="KW-0378">Hydrolase</keyword>
<keyword id="KW-0443">Lipid metabolism</keyword>
<keyword id="KW-0472">Membrane</keyword>
<keyword id="KW-1208">Phospholipid metabolism</keyword>
<keyword id="KW-0597">Phosphoprotein</keyword>
<keyword id="KW-0904">Protein phosphatase</keyword>
<keyword id="KW-0675">Receptor</keyword>
<keyword id="KW-1185">Reference proteome</keyword>
<keyword id="KW-0732">Signal</keyword>
<keyword id="KW-0770">Synapse</keyword>
<keyword id="KW-0812">Transmembrane</keyword>
<keyword id="KW-1133">Transmembrane helix</keyword>
<protein>
    <recommendedName>
        <fullName>Receptor-type tyrosine-protein phosphatase N2</fullName>
        <shortName>R-PTP-N2</shortName>
        <ecNumber>3.1.3.-</ecNumber>
        <ecNumber>3.1.3.48</ecNumber>
    </recommendedName>
    <alternativeName>
        <fullName>M1851</fullName>
    </alternativeName>
    <component>
        <recommendedName>
            <fullName>IA-2beta60</fullName>
        </recommendedName>
    </component>
</protein>